<organism>
    <name type="scientific">Salmonella enteritidis PT4 (strain P125109)</name>
    <dbReference type="NCBI Taxonomy" id="550537"/>
    <lineage>
        <taxon>Bacteria</taxon>
        <taxon>Pseudomonadati</taxon>
        <taxon>Pseudomonadota</taxon>
        <taxon>Gammaproteobacteria</taxon>
        <taxon>Enterobacterales</taxon>
        <taxon>Enterobacteriaceae</taxon>
        <taxon>Salmonella</taxon>
    </lineage>
</organism>
<dbReference type="EMBL" id="AM933172">
    <property type="protein sequence ID" value="CAR32631.1"/>
    <property type="molecule type" value="Genomic_DNA"/>
</dbReference>
<dbReference type="RefSeq" id="WP_000204899.1">
    <property type="nucleotide sequence ID" value="NC_011294.1"/>
</dbReference>
<dbReference type="SMR" id="B5R0Z6"/>
<dbReference type="KEGG" id="set:SEN1046"/>
<dbReference type="HOGENOM" id="CLU_155793_1_0_6"/>
<dbReference type="Proteomes" id="UP000000613">
    <property type="component" value="Chromosome"/>
</dbReference>
<dbReference type="GO" id="GO:0005829">
    <property type="term" value="C:cytosol"/>
    <property type="evidence" value="ECO:0007669"/>
    <property type="project" value="UniProtKB-SubCell"/>
</dbReference>
<dbReference type="GO" id="GO:0044781">
    <property type="term" value="P:bacterial-type flagellum organization"/>
    <property type="evidence" value="ECO:0007669"/>
    <property type="project" value="UniProtKB-KW"/>
</dbReference>
<dbReference type="GO" id="GO:1902209">
    <property type="term" value="P:negative regulation of bacterial-type flagellum assembly"/>
    <property type="evidence" value="ECO:0007669"/>
    <property type="project" value="UniProtKB-UniRule"/>
</dbReference>
<dbReference type="GO" id="GO:0006457">
    <property type="term" value="P:protein folding"/>
    <property type="evidence" value="ECO:0007669"/>
    <property type="project" value="UniProtKB-UniRule"/>
</dbReference>
<dbReference type="FunFam" id="1.20.58.380:FF:000002">
    <property type="entry name" value="Flagellar protein FliT"/>
    <property type="match status" value="1"/>
</dbReference>
<dbReference type="Gene3D" id="1.20.58.380">
    <property type="entry name" value="Flagellar protein flit"/>
    <property type="match status" value="1"/>
</dbReference>
<dbReference type="HAMAP" id="MF_01180">
    <property type="entry name" value="FliT"/>
    <property type="match status" value="1"/>
</dbReference>
<dbReference type="InterPro" id="IPR008622">
    <property type="entry name" value="FliT"/>
</dbReference>
<dbReference type="NCBIfam" id="NF007836">
    <property type="entry name" value="PRK10548.1"/>
    <property type="match status" value="1"/>
</dbReference>
<dbReference type="Pfam" id="PF05400">
    <property type="entry name" value="FliT"/>
    <property type="match status" value="1"/>
</dbReference>
<comment type="function">
    <text evidence="1">Dual-function protein that regulates the transcription of class 2 flagellar operons and that also acts as an export chaperone for the filament-capping protein FliD. As a transcriptional regulator, acts as an anti-FlhDC factor; it directly binds FlhC, thus inhibiting the binding of the FlhC/FlhD complex to class 2 promoters, resulting in decreased expression of class 2 flagellar operons. As a chaperone, effects FliD transition to the membrane by preventing its premature polymerization, and by directing it to the export apparatus.</text>
</comment>
<comment type="subunit">
    <text evidence="1">Homodimer. Interacts with FliD and FlhC.</text>
</comment>
<comment type="subcellular location">
    <subcellularLocation>
        <location evidence="1">Cytoplasm</location>
        <location evidence="1">Cytosol</location>
    </subcellularLocation>
</comment>
<comment type="similarity">
    <text evidence="1">Belongs to the FliT family.</text>
</comment>
<proteinExistence type="inferred from homology"/>
<keyword id="KW-1005">Bacterial flagellum biogenesis</keyword>
<keyword id="KW-0143">Chaperone</keyword>
<keyword id="KW-0963">Cytoplasm</keyword>
<keyword id="KW-0678">Repressor</keyword>
<keyword id="KW-0804">Transcription</keyword>
<keyword id="KW-0805">Transcription regulation</keyword>
<reference key="1">
    <citation type="journal article" date="2008" name="Genome Res.">
        <title>Comparative genome analysis of Salmonella enteritidis PT4 and Salmonella gallinarum 287/91 provides insights into evolutionary and host adaptation pathways.</title>
        <authorList>
            <person name="Thomson N.R."/>
            <person name="Clayton D.J."/>
            <person name="Windhorst D."/>
            <person name="Vernikos G."/>
            <person name="Davidson S."/>
            <person name="Churcher C."/>
            <person name="Quail M.A."/>
            <person name="Stevens M."/>
            <person name="Jones M.A."/>
            <person name="Watson M."/>
            <person name="Barron A."/>
            <person name="Layton A."/>
            <person name="Pickard D."/>
            <person name="Kingsley R.A."/>
            <person name="Bignell A."/>
            <person name="Clark L."/>
            <person name="Harris B."/>
            <person name="Ormond D."/>
            <person name="Abdellah Z."/>
            <person name="Brooks K."/>
            <person name="Cherevach I."/>
            <person name="Chillingworth T."/>
            <person name="Woodward J."/>
            <person name="Norberczak H."/>
            <person name="Lord A."/>
            <person name="Arrowsmith C."/>
            <person name="Jagels K."/>
            <person name="Moule S."/>
            <person name="Mungall K."/>
            <person name="Saunders M."/>
            <person name="Whitehead S."/>
            <person name="Chabalgoity J.A."/>
            <person name="Maskell D."/>
            <person name="Humphreys T."/>
            <person name="Roberts M."/>
            <person name="Barrow P.A."/>
            <person name="Dougan G."/>
            <person name="Parkhill J."/>
        </authorList>
    </citation>
    <scope>NUCLEOTIDE SEQUENCE [LARGE SCALE GENOMIC DNA]</scope>
    <source>
        <strain>P125109</strain>
    </source>
</reference>
<protein>
    <recommendedName>
        <fullName evidence="1">Flagellar protein FliT</fullName>
    </recommendedName>
</protein>
<feature type="chain" id="PRO_1000138182" description="Flagellar protein FliT">
    <location>
        <begin position="1"/>
        <end position="122"/>
    </location>
</feature>
<feature type="region of interest" description="Required for homodimerization" evidence="1">
    <location>
        <begin position="1"/>
        <end position="50"/>
    </location>
</feature>
<feature type="region of interest" description="FliD binding" evidence="1">
    <location>
        <begin position="60"/>
        <end position="98"/>
    </location>
</feature>
<gene>
    <name evidence="1" type="primary">fliT</name>
    <name type="ordered locus">SEN1046</name>
</gene>
<accession>B5R0Z6</accession>
<sequence length="122" mass="13705">MTSTVEFINRWQRIALLSQSLLELAQRGEWDLLLQQEVSYLQSIETVMEKQTPPGITRSIQDMVAGYIKQTLDNEQLLKGLLQQRLDELSSLIGQSTRQKSLNNAYGRLSGMLLVPDAPGAS</sequence>
<name>FLIT_SALEP</name>
<evidence type="ECO:0000255" key="1">
    <source>
        <dbReference type="HAMAP-Rule" id="MF_01180"/>
    </source>
</evidence>